<name>SEGN_PIG</name>
<sequence>MDSACKPTQRRLDAAGFWQIWQRFDADEKGYIEEKELDAFFHHVLTKLGTDDAVMEENVWKMKQQFMAAHDVSKDGHIQMKELACLFLSEDENFLLLFRQETPLDSSVEFMQIWRKYDADSSGFISAAELCNFLRDLFLHHKKAISEAKLEEYTGTMMKIFDKNKDGRLDLNDLARILALQENFLLQFKMDACSTEERKRDFEKIFAHYDVSKTGALEGPEVDGFVKDMMELVQPSISGVDLDKFREILLRHCDVNKDGKIQKSELALCLGLKINP</sequence>
<reference key="1">
    <citation type="submission" date="2006-08" db="EMBL/GenBank/DDBJ databases">
        <authorList>
            <person name="Liu G.Y."/>
        </authorList>
    </citation>
    <scope>NUCLEOTIDE SEQUENCE [LARGE SCALE MRNA]</scope>
</reference>
<feature type="chain" id="PRO_0000330625" description="Secretagogin">
    <location>
        <begin position="1"/>
        <end position="276"/>
    </location>
</feature>
<feature type="domain" description="EF-hand 1" evidence="2">
    <location>
        <begin position="12"/>
        <end position="47"/>
    </location>
</feature>
<feature type="domain" description="EF-hand 2" evidence="2">
    <location>
        <begin position="58"/>
        <end position="93"/>
    </location>
</feature>
<feature type="domain" description="EF-hand 3" evidence="2">
    <location>
        <begin position="105"/>
        <end position="140"/>
    </location>
</feature>
<feature type="domain" description="EF-hand 4" evidence="2">
    <location>
        <begin position="149"/>
        <end position="184"/>
    </location>
</feature>
<feature type="domain" description="EF-hand 5" evidence="2">
    <location>
        <begin position="197"/>
        <end position="232"/>
    </location>
</feature>
<feature type="domain" description="EF-hand 6" evidence="2">
    <location>
        <begin position="240"/>
        <end position="276"/>
    </location>
</feature>
<feature type="binding site" evidence="2">
    <location>
        <position position="71"/>
    </location>
    <ligand>
        <name>Ca(2+)</name>
        <dbReference type="ChEBI" id="CHEBI:29108"/>
        <label>1</label>
    </ligand>
</feature>
<feature type="binding site" evidence="2">
    <location>
        <position position="73"/>
    </location>
    <ligand>
        <name>Ca(2+)</name>
        <dbReference type="ChEBI" id="CHEBI:29108"/>
        <label>1</label>
    </ligand>
</feature>
<feature type="binding site" evidence="2">
    <location>
        <position position="75"/>
    </location>
    <ligand>
        <name>Ca(2+)</name>
        <dbReference type="ChEBI" id="CHEBI:29108"/>
        <label>1</label>
    </ligand>
</feature>
<feature type="binding site" evidence="2">
    <location>
        <position position="77"/>
    </location>
    <ligand>
        <name>Ca(2+)</name>
        <dbReference type="ChEBI" id="CHEBI:29108"/>
        <label>1</label>
    </ligand>
</feature>
<feature type="binding site" evidence="2">
    <location>
        <position position="82"/>
    </location>
    <ligand>
        <name>Ca(2+)</name>
        <dbReference type="ChEBI" id="CHEBI:29108"/>
        <label>1</label>
    </ligand>
</feature>
<feature type="binding site" evidence="2">
    <location>
        <position position="118"/>
    </location>
    <ligand>
        <name>Ca(2+)</name>
        <dbReference type="ChEBI" id="CHEBI:29108"/>
        <label>2</label>
    </ligand>
</feature>
<feature type="binding site" evidence="2">
    <location>
        <position position="120"/>
    </location>
    <ligand>
        <name>Ca(2+)</name>
        <dbReference type="ChEBI" id="CHEBI:29108"/>
        <label>2</label>
    </ligand>
</feature>
<feature type="binding site" evidence="2">
    <location>
        <position position="122"/>
    </location>
    <ligand>
        <name>Ca(2+)</name>
        <dbReference type="ChEBI" id="CHEBI:29108"/>
        <label>2</label>
    </ligand>
</feature>
<feature type="binding site" evidence="2">
    <location>
        <position position="129"/>
    </location>
    <ligand>
        <name>Ca(2+)</name>
        <dbReference type="ChEBI" id="CHEBI:29108"/>
        <label>2</label>
    </ligand>
</feature>
<feature type="binding site" evidence="2">
    <location>
        <position position="162"/>
    </location>
    <ligand>
        <name>Ca(2+)</name>
        <dbReference type="ChEBI" id="CHEBI:29108"/>
        <label>3</label>
    </ligand>
</feature>
<feature type="binding site" evidence="2">
    <location>
        <position position="164"/>
    </location>
    <ligand>
        <name>Ca(2+)</name>
        <dbReference type="ChEBI" id="CHEBI:29108"/>
        <label>3</label>
    </ligand>
</feature>
<feature type="binding site" evidence="2">
    <location>
        <position position="166"/>
    </location>
    <ligand>
        <name>Ca(2+)</name>
        <dbReference type="ChEBI" id="CHEBI:29108"/>
        <label>3</label>
    </ligand>
</feature>
<feature type="binding site" evidence="2">
    <location>
        <position position="168"/>
    </location>
    <ligand>
        <name>Ca(2+)</name>
        <dbReference type="ChEBI" id="CHEBI:29108"/>
        <label>3</label>
    </ligand>
</feature>
<feature type="binding site" evidence="2">
    <location>
        <position position="173"/>
    </location>
    <ligand>
        <name>Ca(2+)</name>
        <dbReference type="ChEBI" id="CHEBI:29108"/>
        <label>3</label>
    </ligand>
</feature>
<feature type="binding site" evidence="2">
    <location>
        <position position="210"/>
    </location>
    <ligand>
        <name>Ca(2+)</name>
        <dbReference type="ChEBI" id="CHEBI:29108"/>
        <label>4</label>
    </ligand>
</feature>
<feature type="binding site" evidence="2">
    <location>
        <position position="212"/>
    </location>
    <ligand>
        <name>Ca(2+)</name>
        <dbReference type="ChEBI" id="CHEBI:29108"/>
        <label>4</label>
    </ligand>
</feature>
<feature type="binding site" evidence="2">
    <location>
        <position position="214"/>
    </location>
    <ligand>
        <name>Ca(2+)</name>
        <dbReference type="ChEBI" id="CHEBI:29108"/>
        <label>4</label>
    </ligand>
</feature>
<feature type="binding site" evidence="2">
    <location>
        <position position="221"/>
    </location>
    <ligand>
        <name>Ca(2+)</name>
        <dbReference type="ChEBI" id="CHEBI:29108"/>
        <label>4</label>
    </ligand>
</feature>
<feature type="binding site" evidence="2">
    <location>
        <position position="254"/>
    </location>
    <ligand>
        <name>Ca(2+)</name>
        <dbReference type="ChEBI" id="CHEBI:29108"/>
        <label>5</label>
    </ligand>
</feature>
<feature type="binding site" evidence="2">
    <location>
        <position position="256"/>
    </location>
    <ligand>
        <name>Ca(2+)</name>
        <dbReference type="ChEBI" id="CHEBI:29108"/>
        <label>5</label>
    </ligand>
</feature>
<feature type="binding site" evidence="2">
    <location>
        <position position="258"/>
    </location>
    <ligand>
        <name>Ca(2+)</name>
        <dbReference type="ChEBI" id="CHEBI:29108"/>
        <label>5</label>
    </ligand>
</feature>
<feature type="binding site" evidence="2">
    <location>
        <position position="260"/>
    </location>
    <ligand>
        <name>Ca(2+)</name>
        <dbReference type="ChEBI" id="CHEBI:29108"/>
        <label>5</label>
    </ligand>
</feature>
<feature type="binding site" evidence="2">
    <location>
        <position position="265"/>
    </location>
    <ligand>
        <name>Ca(2+)</name>
        <dbReference type="ChEBI" id="CHEBI:29108"/>
        <label>5</label>
    </ligand>
</feature>
<keyword id="KW-0106">Calcium</keyword>
<keyword id="KW-0963">Cytoplasm</keyword>
<keyword id="KW-0968">Cytoplasmic vesicle</keyword>
<keyword id="KW-0472">Membrane</keyword>
<keyword id="KW-0479">Metal-binding</keyword>
<keyword id="KW-1185">Reference proteome</keyword>
<keyword id="KW-0677">Repeat</keyword>
<keyword id="KW-0964">Secreted</keyword>
<proteinExistence type="evidence at transcript level"/>
<organism>
    <name type="scientific">Sus scrofa</name>
    <name type="common">Pig</name>
    <dbReference type="NCBI Taxonomy" id="9823"/>
    <lineage>
        <taxon>Eukaryota</taxon>
        <taxon>Metazoa</taxon>
        <taxon>Chordata</taxon>
        <taxon>Craniata</taxon>
        <taxon>Vertebrata</taxon>
        <taxon>Euteleostomi</taxon>
        <taxon>Mammalia</taxon>
        <taxon>Eutheria</taxon>
        <taxon>Laurasiatheria</taxon>
        <taxon>Artiodactyla</taxon>
        <taxon>Suina</taxon>
        <taxon>Suidae</taxon>
        <taxon>Sus</taxon>
    </lineage>
</organism>
<accession>Q06A97</accession>
<gene>
    <name type="primary">SCGN</name>
</gene>
<evidence type="ECO:0000250" key="1"/>
<evidence type="ECO:0000255" key="2">
    <source>
        <dbReference type="PROSITE-ProRule" id="PRU00448"/>
    </source>
</evidence>
<comment type="subcellular location">
    <subcellularLocation>
        <location evidence="1">Cytoplasm</location>
    </subcellularLocation>
    <subcellularLocation>
        <location evidence="1">Secreted</location>
    </subcellularLocation>
    <subcellularLocation>
        <location evidence="1">Cytoplasmic vesicle</location>
        <location evidence="1">Secretory vesicle membrane</location>
        <topology evidence="1">Peripheral membrane protein</topology>
        <orientation evidence="1">Cytoplasmic side</orientation>
    </subcellularLocation>
    <text evidence="1">Predominantly cytoplasmic. A small proportion is associated with secretory granules and membrane fractions (By similarity).</text>
</comment>
<dbReference type="EMBL" id="DQ972967">
    <property type="protein sequence ID" value="ABI96203.1"/>
    <property type="molecule type" value="mRNA"/>
</dbReference>
<dbReference type="RefSeq" id="NP_001070692.1">
    <property type="nucleotide sequence ID" value="NM_001077224.1"/>
</dbReference>
<dbReference type="SMR" id="Q06A97"/>
<dbReference type="FunCoup" id="Q06A97">
    <property type="interactions" value="224"/>
</dbReference>
<dbReference type="STRING" id="9823.ENSSSCP00000061584"/>
<dbReference type="PaxDb" id="9823-ENSSSCP00000001171"/>
<dbReference type="PeptideAtlas" id="Q06A97"/>
<dbReference type="Ensembl" id="ENSSSCT00000001197.3">
    <property type="protein sequence ID" value="ENSSSCP00000001171.2"/>
    <property type="gene ID" value="ENSSSCG00000001101.4"/>
</dbReference>
<dbReference type="Ensembl" id="ENSSSCT00035107283.1">
    <property type="protein sequence ID" value="ENSSSCP00035046311.1"/>
    <property type="gene ID" value="ENSSSCG00035078561.1"/>
</dbReference>
<dbReference type="Ensembl" id="ENSSSCT00045011931.1">
    <property type="protein sequence ID" value="ENSSSCP00045008111.1"/>
    <property type="gene ID" value="ENSSSCG00045007180.1"/>
</dbReference>
<dbReference type="Ensembl" id="ENSSSCT00065063223.1">
    <property type="protein sequence ID" value="ENSSSCP00065027373.1"/>
    <property type="gene ID" value="ENSSSCG00065046234.1"/>
</dbReference>
<dbReference type="Ensembl" id="ENSSSCT00070050059.1">
    <property type="protein sequence ID" value="ENSSSCP00070042287.1"/>
    <property type="gene ID" value="ENSSSCG00070025043.1"/>
</dbReference>
<dbReference type="Ensembl" id="ENSSSCT00110052055">
    <property type="protein sequence ID" value="ENSSSCP00110036409"/>
    <property type="gene ID" value="ENSSSCG00110027138"/>
</dbReference>
<dbReference type="Ensembl" id="ENSSSCT00115009464">
    <property type="protein sequence ID" value="ENSSSCP00115008892"/>
    <property type="gene ID" value="ENSSSCG00115005493"/>
</dbReference>
<dbReference type="Ensembl" id="ENSSSCT00130037060">
    <property type="protein sequence ID" value="ENSSSCP00130025857"/>
    <property type="gene ID" value="ENSSSCG00130019151"/>
</dbReference>
<dbReference type="GeneID" id="768111"/>
<dbReference type="KEGG" id="ssc:768111"/>
<dbReference type="CTD" id="10590"/>
<dbReference type="VGNC" id="VGNC:92624">
    <property type="gene designation" value="SCGN"/>
</dbReference>
<dbReference type="eggNOG" id="KOG0027">
    <property type="taxonomic scope" value="Eukaryota"/>
</dbReference>
<dbReference type="GeneTree" id="ENSGT00950000183108"/>
<dbReference type="HOGENOM" id="CLU_054826_1_1_1"/>
<dbReference type="InParanoid" id="Q06A97"/>
<dbReference type="OMA" id="GFWQIWQ"/>
<dbReference type="OrthoDB" id="428774at2759"/>
<dbReference type="TreeFam" id="TF325083"/>
<dbReference type="Proteomes" id="UP000008227">
    <property type="component" value="Chromosome 7"/>
</dbReference>
<dbReference type="Proteomes" id="UP000314985">
    <property type="component" value="Chromosome 7"/>
</dbReference>
<dbReference type="Proteomes" id="UP000694570">
    <property type="component" value="Unplaced"/>
</dbReference>
<dbReference type="Proteomes" id="UP000694571">
    <property type="component" value="Unplaced"/>
</dbReference>
<dbReference type="Proteomes" id="UP000694720">
    <property type="component" value="Unplaced"/>
</dbReference>
<dbReference type="Proteomes" id="UP000694722">
    <property type="component" value="Unplaced"/>
</dbReference>
<dbReference type="Proteomes" id="UP000694723">
    <property type="component" value="Unplaced"/>
</dbReference>
<dbReference type="Proteomes" id="UP000694724">
    <property type="component" value="Unplaced"/>
</dbReference>
<dbReference type="Proteomes" id="UP000694725">
    <property type="component" value="Unplaced"/>
</dbReference>
<dbReference type="Proteomes" id="UP000694726">
    <property type="component" value="Unplaced"/>
</dbReference>
<dbReference type="Proteomes" id="UP000694727">
    <property type="component" value="Unplaced"/>
</dbReference>
<dbReference type="Proteomes" id="UP000694728">
    <property type="component" value="Unplaced"/>
</dbReference>
<dbReference type="Bgee" id="ENSSSCG00000001101">
    <property type="expression patterns" value="Expressed in hypothalamus and 18 other cell types or tissues"/>
</dbReference>
<dbReference type="ExpressionAtlas" id="Q06A97">
    <property type="expression patterns" value="baseline and differential"/>
</dbReference>
<dbReference type="GO" id="GO:0005829">
    <property type="term" value="C:cytosol"/>
    <property type="evidence" value="ECO:0000318"/>
    <property type="project" value="GO_Central"/>
</dbReference>
<dbReference type="GO" id="GO:0030425">
    <property type="term" value="C:dendrite"/>
    <property type="evidence" value="ECO:0000318"/>
    <property type="project" value="GO_Central"/>
</dbReference>
<dbReference type="GO" id="GO:0005576">
    <property type="term" value="C:extracellular region"/>
    <property type="evidence" value="ECO:0007669"/>
    <property type="project" value="UniProtKB-SubCell"/>
</dbReference>
<dbReference type="GO" id="GO:0005634">
    <property type="term" value="C:nucleus"/>
    <property type="evidence" value="ECO:0000318"/>
    <property type="project" value="GO_Central"/>
</dbReference>
<dbReference type="GO" id="GO:0045202">
    <property type="term" value="C:synapse"/>
    <property type="evidence" value="ECO:0000318"/>
    <property type="project" value="GO_Central"/>
</dbReference>
<dbReference type="GO" id="GO:0043195">
    <property type="term" value="C:terminal bouton"/>
    <property type="evidence" value="ECO:0000318"/>
    <property type="project" value="GO_Central"/>
</dbReference>
<dbReference type="GO" id="GO:0030658">
    <property type="term" value="C:transport vesicle membrane"/>
    <property type="evidence" value="ECO:0007669"/>
    <property type="project" value="UniProtKB-SubCell"/>
</dbReference>
<dbReference type="GO" id="GO:0005509">
    <property type="term" value="F:calcium ion binding"/>
    <property type="evidence" value="ECO:0000318"/>
    <property type="project" value="GO_Central"/>
</dbReference>
<dbReference type="CDD" id="cd16178">
    <property type="entry name" value="EFh_HEF_SCGN"/>
    <property type="match status" value="1"/>
</dbReference>
<dbReference type="FunFam" id="1.10.238.10:FF:000142">
    <property type="entry name" value="Secretagogin"/>
    <property type="match status" value="1"/>
</dbReference>
<dbReference type="FunFam" id="1.10.238.10:FF:000186">
    <property type="entry name" value="Secretagogin"/>
    <property type="match status" value="1"/>
</dbReference>
<dbReference type="FunFam" id="1.10.238.10:FF:000222">
    <property type="entry name" value="Secretagogin"/>
    <property type="match status" value="1"/>
</dbReference>
<dbReference type="Gene3D" id="1.10.238.10">
    <property type="entry name" value="EF-hand"/>
    <property type="match status" value="3"/>
</dbReference>
<dbReference type="InterPro" id="IPR051001">
    <property type="entry name" value="Calbindin_Ca-bind"/>
</dbReference>
<dbReference type="InterPro" id="IPR011992">
    <property type="entry name" value="EF-hand-dom_pair"/>
</dbReference>
<dbReference type="InterPro" id="IPR018247">
    <property type="entry name" value="EF_Hand_1_Ca_BS"/>
</dbReference>
<dbReference type="InterPro" id="IPR002048">
    <property type="entry name" value="EF_hand_dom"/>
</dbReference>
<dbReference type="InterPro" id="IPR035798">
    <property type="entry name" value="EFh_SCGN"/>
</dbReference>
<dbReference type="PANTHER" id="PTHR19972">
    <property type="entry name" value="CALBINDIN"/>
    <property type="match status" value="1"/>
</dbReference>
<dbReference type="PANTHER" id="PTHR19972:SF15">
    <property type="entry name" value="SECRETAGOGIN"/>
    <property type="match status" value="1"/>
</dbReference>
<dbReference type="Pfam" id="PF13202">
    <property type="entry name" value="EF-hand_5"/>
    <property type="match status" value="1"/>
</dbReference>
<dbReference type="Pfam" id="PF13499">
    <property type="entry name" value="EF-hand_7"/>
    <property type="match status" value="1"/>
</dbReference>
<dbReference type="SMART" id="SM00054">
    <property type="entry name" value="EFh"/>
    <property type="match status" value="5"/>
</dbReference>
<dbReference type="SUPFAM" id="SSF47473">
    <property type="entry name" value="EF-hand"/>
    <property type="match status" value="2"/>
</dbReference>
<dbReference type="PROSITE" id="PS00018">
    <property type="entry name" value="EF_HAND_1"/>
    <property type="match status" value="5"/>
</dbReference>
<dbReference type="PROSITE" id="PS50222">
    <property type="entry name" value="EF_HAND_2"/>
    <property type="match status" value="6"/>
</dbReference>
<protein>
    <recommendedName>
        <fullName>Secretagogin</fullName>
    </recommendedName>
</protein>